<proteinExistence type="inferred from homology"/>
<evidence type="ECO:0000250" key="1">
    <source>
        <dbReference type="UniProtKB" id="A0QNH4"/>
    </source>
</evidence>
<evidence type="ECO:0000256" key="2">
    <source>
        <dbReference type="SAM" id="MobiDB-lite"/>
    </source>
</evidence>
<evidence type="ECO:0000269" key="3">
    <source>
    </source>
</evidence>
<evidence type="ECO:0000303" key="4">
    <source>
    </source>
</evidence>
<evidence type="ECO:0000305" key="5">
    <source>
    </source>
</evidence>
<evidence type="ECO:0000312" key="6">
    <source>
        <dbReference type="EMBL" id="AWT51036.1"/>
    </source>
</evidence>
<organism>
    <name type="scientific">Mycolicibacterium smegmatis (strain MKD8)</name>
    <name type="common">Mycobacterium smegmatis</name>
    <dbReference type="NCBI Taxonomy" id="1214915"/>
    <lineage>
        <taxon>Bacteria</taxon>
        <taxon>Bacillati</taxon>
        <taxon>Actinomycetota</taxon>
        <taxon>Actinomycetes</taxon>
        <taxon>Mycobacteriales</taxon>
        <taxon>Mycobacteriaceae</taxon>
        <taxon>Mycolicibacterium</taxon>
    </lineage>
</organism>
<name>SAEA_MYCSE</name>
<sequence length="692" mass="74904">MGERGELVSDLHPSDDHDADPRLAPLLAWRQQLVDSGAVAPRSFKEAHLRLVLRSGRTDVEQIRAMLPGSVAEHAEEMARILAELTPAAPEPDPPPVPEPQPEPEPGPGKHRSPETDEPPVATTTEIPIPTTGFAPFQFSSQQVALHDITVQRTDAAVELSWPPYEAPDDEAARDISVVMYRVVSSDDQAPYSPDPAHLVALTEEPKATDERQQVSPVRHYQVWVNVGASEAAARKAQPVLYATAVLVRPVTGFEIREDAGWVIGQWTAPPGVTAVHVFRVPIDEVDRDEAQYRILTAGENLAGFVDTEPVRGQRYRYRARCAVNVDGVVRLSEAAEADVELAAALMPVTDLVVETAADGASCDLSWTPPAGGQVAIYRSQNGPSAGAEAIELPQGALEQVGLTPELRVTQDLTEETGSDGRRRARLTGVTWPSEWSRAYFTPVTLMGERAMLGRTLSSVRTGTIRDIELAEYCNKQVLTFDWPDGAASVIVYLAPKGHDPRSGLNGRSFEISLEEYERYGGMHLTGQLPVGGCSLHLAPVAFAGGRRVVGAFSSIEYRGLLRLQYAVRIGRDPNGFPTTATIALRAEQNVPGSPGFVLVNNPQRLPLSVHDGHPVDVAPLDARGQLADHPSKELRWSALTTSGDGELWAANLSGLQGWIRLFVNIGSPAQLRVIALLDPPVETLRLTAATL</sequence>
<dbReference type="EMBL" id="CP027541">
    <property type="protein sequence ID" value="AWT51036.1"/>
    <property type="molecule type" value="Genomic_DNA"/>
</dbReference>
<dbReference type="RefSeq" id="WP_003891372.1">
    <property type="nucleotide sequence ID" value="NZ_CP027541.1"/>
</dbReference>
<dbReference type="PATRIC" id="fig|1214915.3.peg.45"/>
<dbReference type="HOGENOM" id="CLU_397843_0_0_11"/>
<dbReference type="Proteomes" id="UP000011200">
    <property type="component" value="Chromosome"/>
</dbReference>
<accession>L8FM21</accession>
<accession>A0A2U9PH32</accession>
<reference key="1">
    <citation type="journal article" date="2013" name="Genome Announc.">
        <title>Draft genome sequence of MKD8, a conjugal recipient Mycobacterium smegmatis strain.</title>
        <authorList>
            <person name="Gray T.A."/>
            <person name="Palumbo M.J."/>
            <person name="Derbyshire K.M."/>
        </authorList>
    </citation>
    <scope>NUCLEOTIDE SEQUENCE [LARGE SCALE GENOMIC DNA]</scope>
    <source>
        <strain>MKD8</strain>
    </source>
</reference>
<reference key="2">
    <citation type="submission" date="2018-03" db="EMBL/GenBank/DDBJ databases">
        <authorList>
            <person name="Derbyshire K."/>
            <person name="Gray T.A."/>
            <person name="Champion M."/>
        </authorList>
    </citation>
    <scope>NUCLEOTIDE SEQUENCE [LARGE SCALE GENOMIC DNA]</scope>
    <source>
        <strain>MKD8</strain>
    </source>
</reference>
<reference key="3">
    <citation type="journal article" date="2008" name="Mol. Microbiol.">
        <title>The specialized secretory apparatus ESX-1 is essential for DNA transfer in Mycobacterium smegmatis.</title>
        <authorList>
            <person name="Coros A."/>
            <person name="Callahan B."/>
            <person name="Battaglioli E."/>
            <person name="Derbyshire K.M."/>
        </authorList>
    </citation>
    <scope>FUNCTION</scope>
    <scope>DISRUPTION PHENOTYPE</scope>
    <source>
        <strain>ATCC 700084 / mc(2)155</strain>
        <strain>MKD8</strain>
    </source>
</reference>
<gene>
    <name type="primary">saeA</name>
    <name evidence="4" type="ORF">0044</name>
    <name evidence="6" type="ORF">D806_000420</name>
    <name type="ORF">D806_0045</name>
</gene>
<protein>
    <recommendedName>
        <fullName>Putative ESX-1 scaffolding and assembly protein SaeA</fullName>
    </recommendedName>
</protein>
<feature type="chain" id="PRO_0000438352" description="Putative ESX-1 scaffolding and assembly protein SaeA">
    <location>
        <begin position="1"/>
        <end position="692"/>
    </location>
</feature>
<feature type="region of interest" description="Disordered" evidence="2">
    <location>
        <begin position="1"/>
        <end position="23"/>
    </location>
</feature>
<feature type="region of interest" description="Disordered" evidence="2">
    <location>
        <begin position="87"/>
        <end position="134"/>
    </location>
</feature>
<feature type="compositionally biased region" description="Basic and acidic residues" evidence="2">
    <location>
        <begin position="1"/>
        <end position="21"/>
    </location>
</feature>
<feature type="compositionally biased region" description="Pro residues" evidence="2">
    <location>
        <begin position="89"/>
        <end position="107"/>
    </location>
</feature>
<comment type="function">
    <text evidence="1 3">May be involved in assembly of the ESX-1 / type VII specialized secretion system (T7SS), which exports several proteins including EsxA and EsxB (By similarity). Involved in DNA conjugation in recipient (MKD8) but not donor (mc(2)155) strain (PubMed:18554329).</text>
</comment>
<comment type="disruption phenotype">
    <text evidence="3">Loss of DNA conjugation when disrupted in recipient strain (MKD8), no effect when disrupted in donor strain (mc(2)155) (PubMed:18554329). The recipient strain does not secrete EsxB (PubMed:18554329).</text>
</comment>
<comment type="miscellaneous">
    <text evidence="5">DNA conjugation in M.smegmatis is unidirectional with distinct donor and recipient strains; mc(2)155 is a donor strain while MKD8 is a recipient strain. Mutations in a donor strain that alter DNA transfer do not always alter DNA transfer in a recipient strain.</text>
</comment>